<accession>A8H4D4</accession>
<sequence>MSDNKFIIGSEEWCAFPALGVPAIKARVDSGARTSSIHAVNIRPFKREGEPWVSFELHPIQNSRKIILRCESKVVDRRNIKSSNGESEKRYVIASVIQLGGNAWEVELTLTNRDSMGYRMLLGREAMSNKTLVDPSESFCLGEKGDLEVEQLYGVKTAKKSGLKIGLLASNPDLYSNRRIIEAGEQRGHEMVFLNISQCYLKLDASSPEVHYRGGRVLNNVDAVIPRIRPSMTFYGCALTRHFESLNIEALNTSDAITRSRDKLFSLQLLQKNNLDIPTSGFANSPVDTKDLIDMVGGAPLIVKLLEGTQGKGVVLAETTKAAESVINAFKSLRVNLLVQEFIKEAQGKDLRCFVIDGKIVASIERTAAPGEFRANIHMGGSASIVSVSAAEKQLAIKAAKTMGLRVAGVDIIRSSRGPLLLEINSSPGLEGIESATGIDIAGAMIESIEKKLGWKAD</sequence>
<keyword id="KW-0067">ATP-binding</keyword>
<keyword id="KW-0436">Ligase</keyword>
<keyword id="KW-0460">Magnesium</keyword>
<keyword id="KW-0464">Manganese</keyword>
<keyword id="KW-0479">Metal-binding</keyword>
<keyword id="KW-0547">Nucleotide-binding</keyword>
<keyword id="KW-0648">Protein biosynthesis</keyword>
<keyword id="KW-1185">Reference proteome</keyword>
<gene>
    <name evidence="1" type="primary">rimK</name>
    <name type="ordered locus">Spea_2101</name>
</gene>
<proteinExistence type="inferred from homology"/>
<comment type="cofactor">
    <cofactor evidence="1">
        <name>Mg(2+)</name>
        <dbReference type="ChEBI" id="CHEBI:18420"/>
    </cofactor>
    <cofactor evidence="1">
        <name>Mn(2+)</name>
        <dbReference type="ChEBI" id="CHEBI:29035"/>
    </cofactor>
    <text evidence="1">Binds 2 magnesium or manganese ions per subunit.</text>
</comment>
<comment type="similarity">
    <text evidence="2">In the C-terminal section; belongs to the RimK family.</text>
</comment>
<reference key="1">
    <citation type="submission" date="2007-10" db="EMBL/GenBank/DDBJ databases">
        <title>Complete sequence of Shewanella pealeana ATCC 700345.</title>
        <authorList>
            <consortium name="US DOE Joint Genome Institute"/>
            <person name="Copeland A."/>
            <person name="Lucas S."/>
            <person name="Lapidus A."/>
            <person name="Barry K."/>
            <person name="Glavina del Rio T."/>
            <person name="Dalin E."/>
            <person name="Tice H."/>
            <person name="Pitluck S."/>
            <person name="Chertkov O."/>
            <person name="Brettin T."/>
            <person name="Bruce D."/>
            <person name="Detter J.C."/>
            <person name="Han C."/>
            <person name="Schmutz J."/>
            <person name="Larimer F."/>
            <person name="Land M."/>
            <person name="Hauser L."/>
            <person name="Kyrpides N."/>
            <person name="Kim E."/>
            <person name="Zhao J.-S.Z."/>
            <person name="Manno D."/>
            <person name="Hawari J."/>
            <person name="Richardson P."/>
        </authorList>
    </citation>
    <scope>NUCLEOTIDE SEQUENCE [LARGE SCALE GENOMIC DNA]</scope>
    <source>
        <strain>ATCC 700345 / ANG-SQ1</strain>
    </source>
</reference>
<name>RIMK_SHEPA</name>
<protein>
    <recommendedName>
        <fullName evidence="1">Probable alpha-L-glutamate ligase</fullName>
        <ecNumber evidence="1">6.3.2.-</ecNumber>
    </recommendedName>
</protein>
<organism>
    <name type="scientific">Shewanella pealeana (strain ATCC 700345 / ANG-SQ1)</name>
    <dbReference type="NCBI Taxonomy" id="398579"/>
    <lineage>
        <taxon>Bacteria</taxon>
        <taxon>Pseudomonadati</taxon>
        <taxon>Pseudomonadota</taxon>
        <taxon>Gammaproteobacteria</taxon>
        <taxon>Alteromonadales</taxon>
        <taxon>Shewanellaceae</taxon>
        <taxon>Shewanella</taxon>
    </lineage>
</organism>
<feature type="chain" id="PRO_0000340571" description="Probable alpha-L-glutamate ligase">
    <location>
        <begin position="1"/>
        <end position="458"/>
    </location>
</feature>
<feature type="domain" description="ATP-grasp" evidence="1">
    <location>
        <begin position="267"/>
        <end position="450"/>
    </location>
</feature>
<feature type="region of interest" description="Unknown">
    <location>
        <begin position="1"/>
        <end position="162"/>
    </location>
</feature>
<feature type="region of interest" description="Alpha-L-glutamate ligase">
    <location>
        <begin position="163"/>
        <end position="458"/>
    </location>
</feature>
<feature type="binding site" evidence="1">
    <location>
        <position position="304"/>
    </location>
    <ligand>
        <name>ATP</name>
        <dbReference type="ChEBI" id="CHEBI:30616"/>
    </ligand>
</feature>
<feature type="binding site" evidence="1">
    <location>
        <begin position="341"/>
        <end position="342"/>
    </location>
    <ligand>
        <name>ATP</name>
        <dbReference type="ChEBI" id="CHEBI:30616"/>
    </ligand>
</feature>
<feature type="binding site" evidence="1">
    <location>
        <position position="350"/>
    </location>
    <ligand>
        <name>ATP</name>
        <dbReference type="ChEBI" id="CHEBI:30616"/>
    </ligand>
</feature>
<feature type="binding site" evidence="1">
    <location>
        <begin position="374"/>
        <end position="376"/>
    </location>
    <ligand>
        <name>ATP</name>
        <dbReference type="ChEBI" id="CHEBI:30616"/>
    </ligand>
</feature>
<feature type="binding site" evidence="1">
    <location>
        <position position="411"/>
    </location>
    <ligand>
        <name>Mg(2+)</name>
        <dbReference type="ChEBI" id="CHEBI:18420"/>
        <label>1</label>
    </ligand>
</feature>
<feature type="binding site" evidence="1">
    <location>
        <position position="411"/>
    </location>
    <ligand>
        <name>Mn(2+)</name>
        <dbReference type="ChEBI" id="CHEBI:29035"/>
        <label>1</label>
    </ligand>
</feature>
<feature type="binding site" evidence="1">
    <location>
        <position position="423"/>
    </location>
    <ligand>
        <name>Mg(2+)</name>
        <dbReference type="ChEBI" id="CHEBI:18420"/>
        <label>1</label>
    </ligand>
</feature>
<feature type="binding site" evidence="1">
    <location>
        <position position="423"/>
    </location>
    <ligand>
        <name>Mg(2+)</name>
        <dbReference type="ChEBI" id="CHEBI:18420"/>
        <label>2</label>
    </ligand>
</feature>
<feature type="binding site" evidence="1">
    <location>
        <position position="423"/>
    </location>
    <ligand>
        <name>Mn(2+)</name>
        <dbReference type="ChEBI" id="CHEBI:29035"/>
        <label>1</label>
    </ligand>
</feature>
<feature type="binding site" evidence="1">
    <location>
        <position position="423"/>
    </location>
    <ligand>
        <name>Mn(2+)</name>
        <dbReference type="ChEBI" id="CHEBI:29035"/>
        <label>2</label>
    </ligand>
</feature>
<feature type="binding site" evidence="1">
    <location>
        <position position="425"/>
    </location>
    <ligand>
        <name>Mg(2+)</name>
        <dbReference type="ChEBI" id="CHEBI:18420"/>
        <label>2</label>
    </ligand>
</feature>
<feature type="binding site" evidence="1">
    <location>
        <position position="425"/>
    </location>
    <ligand>
        <name>Mn(2+)</name>
        <dbReference type="ChEBI" id="CHEBI:29035"/>
        <label>2</label>
    </ligand>
</feature>
<evidence type="ECO:0000255" key="1">
    <source>
        <dbReference type="HAMAP-Rule" id="MF_01552"/>
    </source>
</evidence>
<evidence type="ECO:0000305" key="2"/>
<dbReference type="EC" id="6.3.2.-" evidence="1"/>
<dbReference type="EMBL" id="CP000851">
    <property type="protein sequence ID" value="ABV87421.1"/>
    <property type="molecule type" value="Genomic_DNA"/>
</dbReference>
<dbReference type="SMR" id="A8H4D4"/>
<dbReference type="STRING" id="398579.Spea_2101"/>
<dbReference type="KEGG" id="spl:Spea_2101"/>
<dbReference type="eggNOG" id="COG0189">
    <property type="taxonomic scope" value="Bacteria"/>
</dbReference>
<dbReference type="eggNOG" id="COG4067">
    <property type="taxonomic scope" value="Bacteria"/>
</dbReference>
<dbReference type="HOGENOM" id="CLU_045509_0_0_6"/>
<dbReference type="Proteomes" id="UP000002608">
    <property type="component" value="Chromosome"/>
</dbReference>
<dbReference type="GO" id="GO:0005737">
    <property type="term" value="C:cytoplasm"/>
    <property type="evidence" value="ECO:0007669"/>
    <property type="project" value="TreeGrafter"/>
</dbReference>
<dbReference type="GO" id="GO:0005524">
    <property type="term" value="F:ATP binding"/>
    <property type="evidence" value="ECO:0007669"/>
    <property type="project" value="UniProtKB-UniRule"/>
</dbReference>
<dbReference type="GO" id="GO:0046872">
    <property type="term" value="F:metal ion binding"/>
    <property type="evidence" value="ECO:0007669"/>
    <property type="project" value="UniProtKB-KW"/>
</dbReference>
<dbReference type="GO" id="GO:0018169">
    <property type="term" value="F:ribosomal S6-glutamic acid ligase activity"/>
    <property type="evidence" value="ECO:0007669"/>
    <property type="project" value="TreeGrafter"/>
</dbReference>
<dbReference type="GO" id="GO:0036211">
    <property type="term" value="P:protein modification process"/>
    <property type="evidence" value="ECO:0007669"/>
    <property type="project" value="InterPro"/>
</dbReference>
<dbReference type="GO" id="GO:0009432">
    <property type="term" value="P:SOS response"/>
    <property type="evidence" value="ECO:0007669"/>
    <property type="project" value="TreeGrafter"/>
</dbReference>
<dbReference type="GO" id="GO:0006412">
    <property type="term" value="P:translation"/>
    <property type="evidence" value="ECO:0007669"/>
    <property type="project" value="UniProtKB-KW"/>
</dbReference>
<dbReference type="FunFam" id="3.30.1490.20:FF:000005">
    <property type="entry name" value="Probable alpha-L-glutamate ligase 1"/>
    <property type="match status" value="1"/>
</dbReference>
<dbReference type="Gene3D" id="3.40.50.20">
    <property type="match status" value="1"/>
</dbReference>
<dbReference type="Gene3D" id="2.40.70.10">
    <property type="entry name" value="Acid Proteases"/>
    <property type="match status" value="1"/>
</dbReference>
<dbReference type="Gene3D" id="3.30.1490.20">
    <property type="entry name" value="ATP-grasp fold, A domain"/>
    <property type="match status" value="1"/>
</dbReference>
<dbReference type="Gene3D" id="3.30.470.20">
    <property type="entry name" value="ATP-grasp fold, B domain"/>
    <property type="match status" value="1"/>
</dbReference>
<dbReference type="HAMAP" id="MF_01552">
    <property type="entry name" value="RimK"/>
    <property type="match status" value="1"/>
</dbReference>
<dbReference type="InterPro" id="IPR011761">
    <property type="entry name" value="ATP-grasp"/>
</dbReference>
<dbReference type="InterPro" id="IPR013651">
    <property type="entry name" value="ATP-grasp_RimK-type"/>
</dbReference>
<dbReference type="InterPro" id="IPR013815">
    <property type="entry name" value="ATP_grasp_subdomain_1"/>
</dbReference>
<dbReference type="InterPro" id="IPR021109">
    <property type="entry name" value="Peptidase_aspartic_dom_sf"/>
</dbReference>
<dbReference type="InterPro" id="IPR008503">
    <property type="entry name" value="Put_Zn_protease"/>
</dbReference>
<dbReference type="InterPro" id="IPR023533">
    <property type="entry name" value="RimK"/>
</dbReference>
<dbReference type="InterPro" id="IPR041107">
    <property type="entry name" value="Rimk_N"/>
</dbReference>
<dbReference type="InterPro" id="IPR004666">
    <property type="entry name" value="Rp_bS6_RimK/Lys_biosynth_LsyX"/>
</dbReference>
<dbReference type="NCBIfam" id="NF007764">
    <property type="entry name" value="PRK10446.1"/>
    <property type="match status" value="1"/>
</dbReference>
<dbReference type="NCBIfam" id="TIGR00768">
    <property type="entry name" value="rimK_fam"/>
    <property type="match status" value="1"/>
</dbReference>
<dbReference type="PANTHER" id="PTHR21621:SF7">
    <property type="entry name" value="RIBOSOMAL PROTEIN BS6--L-GLUTAMATE LIGASE"/>
    <property type="match status" value="1"/>
</dbReference>
<dbReference type="PANTHER" id="PTHR21621">
    <property type="entry name" value="RIBOSOMAL PROTEIN S6 MODIFICATION PROTEIN"/>
    <property type="match status" value="1"/>
</dbReference>
<dbReference type="Pfam" id="PF08443">
    <property type="entry name" value="RimK"/>
    <property type="match status" value="1"/>
</dbReference>
<dbReference type="Pfam" id="PF18030">
    <property type="entry name" value="Rimk_N"/>
    <property type="match status" value="1"/>
</dbReference>
<dbReference type="Pfam" id="PF05618">
    <property type="entry name" value="Zn_protease"/>
    <property type="match status" value="1"/>
</dbReference>
<dbReference type="SUPFAM" id="SSF50630">
    <property type="entry name" value="Acid proteases"/>
    <property type="match status" value="1"/>
</dbReference>
<dbReference type="SUPFAM" id="SSF56059">
    <property type="entry name" value="Glutathione synthetase ATP-binding domain-like"/>
    <property type="match status" value="1"/>
</dbReference>
<dbReference type="PROSITE" id="PS50975">
    <property type="entry name" value="ATP_GRASP"/>
    <property type="match status" value="1"/>
</dbReference>